<gene>
    <name type="primary">cry1Aa</name>
    <name type="synonym">cry-1-1</name>
    <name type="synonym">cry1A(a)</name>
    <name type="synonym">cryA</name>
    <name type="synonym">crybns3-1</name>
    <name type="synonym">cryIA(a)</name>
    <name type="synonym">icp</name>
</gene>
<accession>P0A368</accession>
<accession>P02965</accession>
<accession>P09664</accession>
<accession>P09665</accession>
<accession>P16478</accession>
<accession>Q9RED5</accession>
<comment type="function">
    <text>Promotes colloidosmotic lysis by binding to the midgut epithelial cells of many lepidopteran larvae.</text>
</comment>
<comment type="developmental stage">
    <text>The crystal protein is produced during sporulation and is accumulated both as an inclusion and as part of the spore coat.</text>
</comment>
<comment type="miscellaneous">
    <text>Toxic segment of the protein is located in the N-terminus.</text>
</comment>
<comment type="similarity">
    <text evidence="1">Belongs to the delta endotoxin family.</text>
</comment>
<sequence>MDNNPNINECIPYNCLSNPEVEVLGGERIETGYTPIDISLSLTQFLLSEFVPGAGFVLGLVDIIWGIFGPSQWDAFPVQIEQLINQRIEEFARNQAISRLEGLSNLYQIYAESFREWEADPTNPALREEMRIQFNDMNSALTTAIPLLAVQNYQVPLLSVYVQAANLHLSVLRDVSVFGQRWGFDAATINSRYNDLTRLIGNYTDYAVRWYNTGLERVWGPDSRDWVRYNQFRRELTLTVLDIVALFSNYDSRRYPIRTVSQLTREIYTNPVLENFDGSFRGMAQRIEQNIRQPHLMDILNSITIYTDVHRGFNYWSGHQITASPVGFSGPEFAFPLFGNAGNAAPPVLVSLTGLGIFRTLSSPLYRRIILGSGPNNQELFVLDGTEFSFASLTTNLPSTIYRQRGTVDSLDVIPPQDNSVPPRAGFSHRLSHVTMLSQAAGAVYTLRAPTFSWQHRSAEFNNIIPSSQITQIPLTKSTNLGSGTSVVKGPGFTGGDILRRTSPGQISTLRVNITAPLSQRYRVRIRYASTTNLQFHTSIDGRPINQGNFSATMSSGSNLQSGSFRTVGFTTPFNFSNGSSVFTLSAHVFNSGNEVYIDRIEFVPAEVTFEAEYDLERAQKAVNELFTSSNQIGLKTDVTDYHIDQVSNLVECLSDEFCLDEKQELSEKVKHAKRLSDERNLLQDPNFRGINRQLDRGWRGSTDITIQGGDDVFKENYVTLLGTFDECYPTYLYQKIDESKLKAYTRYQLRGYIEDSQDLEIYLIRYNAKHETVNVPGTGSLWPLSAQSPIGKCGEPNRCAPHLEWNPDLDCSCRDGEKCAHHSHHFSLDIDVGCTDLNEDLGVWVIFKIKTQDGHARLGNLEFLEEKPLVGEALARVKRAEKKWRDKREKLEWETNIVYKEAKESVDALFVNSQYDQLQADTNIAMIHAADKRVHSIREAYLPELSVIPGVNAAIFEELEGRIFTAFSLYDARNVIKNGDFNNGLSCWNVKGHVDVEEQNNQRSVLVVPEWEAEVSQEVRVCPGRGYILRVTAYKEGYGEGCVTIHEIENNTDELKFSNCVEEEIYPNNTVTCNDYTVNQEEYGGAYTSRNRGYNEAPSVPADYASVYEEKSYTDGRRENPCEFNRGYRDYTPLPVGYVTKELEYFPETDKVWIEIGETEGTFIVDSVELLLMEE</sequence>
<protein>
    <recommendedName>
        <fullName>Pesticidal crystal protein Cry1Aa</fullName>
    </recommendedName>
    <alternativeName>
        <fullName>133 kDa crystal protein</fullName>
    </alternativeName>
    <alternativeName>
        <fullName>Crystaline entomocidal protoxin</fullName>
    </alternativeName>
    <alternativeName>
        <fullName>Insecticidal delta-endotoxin CryIA(a)</fullName>
    </alternativeName>
</protein>
<dbReference type="EMBL" id="X13535">
    <property type="protein sequence ID" value="CAA31886.1"/>
    <property type="molecule type" value="Genomic_DNA"/>
</dbReference>
<dbReference type="PIR" id="S02215">
    <property type="entry name" value="S02215"/>
</dbReference>
<dbReference type="SMR" id="P0A368"/>
<dbReference type="GO" id="GO:0005102">
    <property type="term" value="F:signaling receptor binding"/>
    <property type="evidence" value="ECO:0007669"/>
    <property type="project" value="InterPro"/>
</dbReference>
<dbReference type="GO" id="GO:0090729">
    <property type="term" value="F:toxin activity"/>
    <property type="evidence" value="ECO:0007669"/>
    <property type="project" value="UniProtKB-KW"/>
</dbReference>
<dbReference type="GO" id="GO:0030435">
    <property type="term" value="P:sporulation resulting in formation of a cellular spore"/>
    <property type="evidence" value="ECO:0007669"/>
    <property type="project" value="UniProtKB-KW"/>
</dbReference>
<dbReference type="GO" id="GO:0001907">
    <property type="term" value="P:symbiont-mediated killing of host cell"/>
    <property type="evidence" value="ECO:0007669"/>
    <property type="project" value="InterPro"/>
</dbReference>
<dbReference type="CDD" id="cd04085">
    <property type="entry name" value="delta_endotoxin_C"/>
    <property type="match status" value="1"/>
</dbReference>
<dbReference type="Gene3D" id="2.60.120.260">
    <property type="entry name" value="Galactose-binding domain-like"/>
    <property type="match status" value="2"/>
</dbReference>
<dbReference type="Gene3D" id="2.100.10.10">
    <property type="entry name" value="Pesticidal crystal protein, central domain"/>
    <property type="match status" value="1"/>
</dbReference>
<dbReference type="Gene3D" id="1.20.190.10">
    <property type="entry name" value="Pesticidal crystal protein, N-terminal domain"/>
    <property type="match status" value="1"/>
</dbReference>
<dbReference type="InterPro" id="IPR048645">
    <property type="entry name" value="Cry1Ac-like_dom-VII"/>
</dbReference>
<dbReference type="InterPro" id="IPR041587">
    <property type="entry name" value="Cry_V"/>
</dbReference>
<dbReference type="InterPro" id="IPR008979">
    <property type="entry name" value="Galactose-bd-like_sf"/>
</dbReference>
<dbReference type="InterPro" id="IPR038979">
    <property type="entry name" value="Pest_crys"/>
</dbReference>
<dbReference type="InterPro" id="IPR054544">
    <property type="entry name" value="Pest_crys_Cry1Aa_dom-IV"/>
</dbReference>
<dbReference type="InterPro" id="IPR005638">
    <property type="entry name" value="Pest_crys_dom-III"/>
</dbReference>
<dbReference type="InterPro" id="IPR005639">
    <property type="entry name" value="Pest_crys_dom_I"/>
</dbReference>
<dbReference type="InterPro" id="IPR036716">
    <property type="entry name" value="Pest_crys_N_sf"/>
</dbReference>
<dbReference type="InterPro" id="IPR036399">
    <property type="entry name" value="Pest_cryst_cen_dom_sf"/>
</dbReference>
<dbReference type="InterPro" id="IPR001178">
    <property type="entry name" value="Pest_cryst_dom_II"/>
</dbReference>
<dbReference type="PANTHER" id="PTHR37003">
    <property type="entry name" value="ENDOTOXIN_N DOMAIN-CONTAINING PROTEIN-RELATED"/>
    <property type="match status" value="1"/>
</dbReference>
<dbReference type="PANTHER" id="PTHR37003:SF2">
    <property type="entry name" value="PESTICIDAL CRYSTAL PROTEIN N-TERMINAL DOMAIN-CONTAINING PROTEIN"/>
    <property type="match status" value="1"/>
</dbReference>
<dbReference type="Pfam" id="PF17997">
    <property type="entry name" value="Cry1Ac_D5"/>
    <property type="match status" value="1"/>
</dbReference>
<dbReference type="Pfam" id="PF21463">
    <property type="entry name" value="Cry1Ac_dom-VII"/>
    <property type="match status" value="1"/>
</dbReference>
<dbReference type="Pfam" id="PF03944">
    <property type="entry name" value="Endotoxin_C"/>
    <property type="match status" value="1"/>
</dbReference>
<dbReference type="Pfam" id="PF18449">
    <property type="entry name" value="Endotoxin_C2"/>
    <property type="match status" value="1"/>
</dbReference>
<dbReference type="Pfam" id="PF00555">
    <property type="entry name" value="Endotoxin_M"/>
    <property type="match status" value="1"/>
</dbReference>
<dbReference type="Pfam" id="PF03945">
    <property type="entry name" value="Endotoxin_N"/>
    <property type="match status" value="1"/>
</dbReference>
<dbReference type="SUPFAM" id="SSF51096">
    <property type="entry name" value="delta-Endotoxin (insectocide), middle domain"/>
    <property type="match status" value="1"/>
</dbReference>
<dbReference type="SUPFAM" id="SSF56849">
    <property type="entry name" value="delta-Endotoxin (insectocide), N-terminal domain"/>
    <property type="match status" value="1"/>
</dbReference>
<dbReference type="SUPFAM" id="SSF49785">
    <property type="entry name" value="Galactose-binding domain-like"/>
    <property type="match status" value="1"/>
</dbReference>
<name>CR1AA_BACTE</name>
<keyword id="KW-0749">Sporulation</keyword>
<keyword id="KW-0800">Toxin</keyword>
<keyword id="KW-0843">Virulence</keyword>
<evidence type="ECO:0000305" key="1"/>
<organism>
    <name type="scientific">Bacillus thuringiensis subsp. entomocidus</name>
    <dbReference type="NCBI Taxonomy" id="1436"/>
    <lineage>
        <taxon>Bacteria</taxon>
        <taxon>Bacillati</taxon>
        <taxon>Bacillota</taxon>
        <taxon>Bacilli</taxon>
        <taxon>Bacillales</taxon>
        <taxon>Bacillaceae</taxon>
        <taxon>Bacillus</taxon>
        <taxon>Bacillus cereus group</taxon>
    </lineage>
</organism>
<feature type="chain" id="PRO_0000174018" description="Pesticidal crystal protein Cry1Aa">
    <location>
        <begin position="1"/>
        <end position="1176"/>
    </location>
</feature>
<reference key="1">
    <citation type="journal article" date="1989" name="Nucleic Acids Res.">
        <title>Nucleotide sequence of a gene cloned from Bacillus thuringiensis subspecies entomocidus coding for an insecticidal protein toxic for Bombyx mori.</title>
        <authorList>
            <person name="Masson L."/>
            <person name="Marcotte P."/>
            <person name="Prefontaine G."/>
            <person name="Brousseau R."/>
        </authorList>
    </citation>
    <scope>NUCLEOTIDE SEQUENCE [GENOMIC DNA]</scope>
</reference>
<proteinExistence type="evidence at transcript level"/>